<keyword id="KW-0131">Cell cycle</keyword>
<keyword id="KW-0132">Cell division</keyword>
<keyword id="KW-0997">Cell inner membrane</keyword>
<keyword id="KW-1003">Cell membrane</keyword>
<keyword id="KW-0133">Cell shape</keyword>
<keyword id="KW-0961">Cell wall biogenesis/degradation</keyword>
<keyword id="KW-0328">Glycosyltransferase</keyword>
<keyword id="KW-0472">Membrane</keyword>
<keyword id="KW-0573">Peptidoglycan synthesis</keyword>
<keyword id="KW-0808">Transferase</keyword>
<reference key="1">
    <citation type="submission" date="2006-11" db="EMBL/GenBank/DDBJ databases">
        <title>Identification and characterization of a new conjugation/ type IVA secretion system (trb/tra) of L. pneumophila Corby localized on a mobile genomic island.</title>
        <authorList>
            <person name="Gloeckner G."/>
            <person name="Albert-Weissenberger C."/>
            <person name="Weinmann E."/>
            <person name="Jacobi S."/>
            <person name="Schunder E."/>
            <person name="Steinert M."/>
            <person name="Buchrieser C."/>
            <person name="Hacker J."/>
            <person name="Heuner K."/>
        </authorList>
    </citation>
    <scope>NUCLEOTIDE SEQUENCE [LARGE SCALE GENOMIC DNA]</scope>
    <source>
        <strain>Corby</strain>
    </source>
</reference>
<accession>A5IGA6</accession>
<name>MURG_LEGPC</name>
<evidence type="ECO:0000255" key="1">
    <source>
        <dbReference type="HAMAP-Rule" id="MF_00033"/>
    </source>
</evidence>
<proteinExistence type="inferred from homology"/>
<organism>
    <name type="scientific">Legionella pneumophila (strain Corby)</name>
    <dbReference type="NCBI Taxonomy" id="400673"/>
    <lineage>
        <taxon>Bacteria</taxon>
        <taxon>Pseudomonadati</taxon>
        <taxon>Pseudomonadota</taxon>
        <taxon>Gammaproteobacteria</taxon>
        <taxon>Legionellales</taxon>
        <taxon>Legionellaceae</taxon>
        <taxon>Legionella</taxon>
    </lineage>
</organism>
<feature type="chain" id="PRO_0000315107" description="UDP-N-acetylglucosamine--N-acetylmuramyl-(pentapeptide) pyrophosphoryl-undecaprenol N-acetylglucosamine transferase">
    <location>
        <begin position="1"/>
        <end position="363"/>
    </location>
</feature>
<feature type="binding site" evidence="1">
    <location>
        <begin position="12"/>
        <end position="14"/>
    </location>
    <ligand>
        <name>UDP-N-acetyl-alpha-D-glucosamine</name>
        <dbReference type="ChEBI" id="CHEBI:57705"/>
    </ligand>
</feature>
<feature type="binding site" evidence="1">
    <location>
        <position position="196"/>
    </location>
    <ligand>
        <name>UDP-N-acetyl-alpha-D-glucosamine</name>
        <dbReference type="ChEBI" id="CHEBI:57705"/>
    </ligand>
</feature>
<feature type="binding site" evidence="1">
    <location>
        <position position="291"/>
    </location>
    <ligand>
        <name>UDP-N-acetyl-alpha-D-glucosamine</name>
        <dbReference type="ChEBI" id="CHEBI:57705"/>
    </ligand>
</feature>
<dbReference type="EC" id="2.4.1.227" evidence="1"/>
<dbReference type="EMBL" id="CP000675">
    <property type="protein sequence ID" value="ABQ56406.1"/>
    <property type="molecule type" value="Genomic_DNA"/>
</dbReference>
<dbReference type="RefSeq" id="WP_011945929.1">
    <property type="nucleotide sequence ID" value="NC_009494.2"/>
</dbReference>
<dbReference type="SMR" id="A5IGA6"/>
<dbReference type="CAZy" id="GT28">
    <property type="family name" value="Glycosyltransferase Family 28"/>
</dbReference>
<dbReference type="KEGG" id="lpc:LPC_2487"/>
<dbReference type="HOGENOM" id="CLU_037404_0_0_6"/>
<dbReference type="UniPathway" id="UPA00219"/>
<dbReference type="GO" id="GO:0005886">
    <property type="term" value="C:plasma membrane"/>
    <property type="evidence" value="ECO:0007669"/>
    <property type="project" value="UniProtKB-SubCell"/>
</dbReference>
<dbReference type="GO" id="GO:0051991">
    <property type="term" value="F:UDP-N-acetyl-D-glucosamine:N-acetylmuramoyl-L-alanyl-D-glutamyl-meso-2,6-diaminopimelyl-D-alanyl-D-alanine-diphosphoundecaprenol 4-beta-N-acetylglucosaminlytransferase activity"/>
    <property type="evidence" value="ECO:0007669"/>
    <property type="project" value="RHEA"/>
</dbReference>
<dbReference type="GO" id="GO:0050511">
    <property type="term" value="F:undecaprenyldiphospho-muramoylpentapeptide beta-N-acetylglucosaminyltransferase activity"/>
    <property type="evidence" value="ECO:0007669"/>
    <property type="project" value="UniProtKB-UniRule"/>
</dbReference>
<dbReference type="GO" id="GO:0005975">
    <property type="term" value="P:carbohydrate metabolic process"/>
    <property type="evidence" value="ECO:0007669"/>
    <property type="project" value="InterPro"/>
</dbReference>
<dbReference type="GO" id="GO:0051301">
    <property type="term" value="P:cell division"/>
    <property type="evidence" value="ECO:0007669"/>
    <property type="project" value="UniProtKB-KW"/>
</dbReference>
<dbReference type="GO" id="GO:0071555">
    <property type="term" value="P:cell wall organization"/>
    <property type="evidence" value="ECO:0007669"/>
    <property type="project" value="UniProtKB-KW"/>
</dbReference>
<dbReference type="GO" id="GO:0030259">
    <property type="term" value="P:lipid glycosylation"/>
    <property type="evidence" value="ECO:0007669"/>
    <property type="project" value="UniProtKB-UniRule"/>
</dbReference>
<dbReference type="GO" id="GO:0009252">
    <property type="term" value="P:peptidoglycan biosynthetic process"/>
    <property type="evidence" value="ECO:0007669"/>
    <property type="project" value="UniProtKB-UniRule"/>
</dbReference>
<dbReference type="GO" id="GO:0008360">
    <property type="term" value="P:regulation of cell shape"/>
    <property type="evidence" value="ECO:0007669"/>
    <property type="project" value="UniProtKB-KW"/>
</dbReference>
<dbReference type="CDD" id="cd03785">
    <property type="entry name" value="GT28_MurG"/>
    <property type="match status" value="1"/>
</dbReference>
<dbReference type="Gene3D" id="3.40.50.2000">
    <property type="entry name" value="Glycogen Phosphorylase B"/>
    <property type="match status" value="2"/>
</dbReference>
<dbReference type="HAMAP" id="MF_00033">
    <property type="entry name" value="MurG"/>
    <property type="match status" value="1"/>
</dbReference>
<dbReference type="InterPro" id="IPR006009">
    <property type="entry name" value="GlcNAc_MurG"/>
</dbReference>
<dbReference type="InterPro" id="IPR007235">
    <property type="entry name" value="Glyco_trans_28_C"/>
</dbReference>
<dbReference type="InterPro" id="IPR004276">
    <property type="entry name" value="GlycoTrans_28_N"/>
</dbReference>
<dbReference type="NCBIfam" id="NF009102">
    <property type="entry name" value="PRK12446.1"/>
    <property type="match status" value="1"/>
</dbReference>
<dbReference type="PANTHER" id="PTHR21015:SF27">
    <property type="entry name" value="UDP-N-ACETYLGLUCOSAMINE--N-ACETYLMURAMYL-(PENTAPEPTIDE) PYROPHOSPHORYL-UNDECAPRENOL N-ACETYLGLUCOSAMINE TRANSFERASE"/>
    <property type="match status" value="1"/>
</dbReference>
<dbReference type="PANTHER" id="PTHR21015">
    <property type="entry name" value="UDP-N-ACETYLGLUCOSAMINE--N-ACETYLMURAMYL-(PENTAPEPTIDE) PYROPHOSPHORYL-UNDECAPRENOL N-ACETYLGLUCOSAMINE TRANSFERASE 1"/>
    <property type="match status" value="1"/>
</dbReference>
<dbReference type="Pfam" id="PF04101">
    <property type="entry name" value="Glyco_tran_28_C"/>
    <property type="match status" value="1"/>
</dbReference>
<dbReference type="Pfam" id="PF03033">
    <property type="entry name" value="Glyco_transf_28"/>
    <property type="match status" value="1"/>
</dbReference>
<dbReference type="SUPFAM" id="SSF53756">
    <property type="entry name" value="UDP-Glycosyltransferase/glycogen phosphorylase"/>
    <property type="match status" value="1"/>
</dbReference>
<protein>
    <recommendedName>
        <fullName evidence="1">UDP-N-acetylglucosamine--N-acetylmuramyl-(pentapeptide) pyrophosphoryl-undecaprenol N-acetylglucosamine transferase</fullName>
        <ecNumber evidence="1">2.4.1.227</ecNumber>
    </recommendedName>
    <alternativeName>
        <fullName evidence="1">Undecaprenyl-PP-MurNAc-pentapeptide-UDPGlcNAc GlcNAc transferase</fullName>
    </alternativeName>
</protein>
<gene>
    <name evidence="1" type="primary">murG</name>
    <name type="ordered locus">LPC_2487</name>
</gene>
<comment type="function">
    <text evidence="1">Cell wall formation. Catalyzes the transfer of a GlcNAc subunit on undecaprenyl-pyrophosphoryl-MurNAc-pentapeptide (lipid intermediate I) to form undecaprenyl-pyrophosphoryl-MurNAc-(pentapeptide)GlcNAc (lipid intermediate II).</text>
</comment>
<comment type="catalytic activity">
    <reaction evidence="1">
        <text>di-trans,octa-cis-undecaprenyl diphospho-N-acetyl-alpha-D-muramoyl-L-alanyl-D-glutamyl-meso-2,6-diaminopimeloyl-D-alanyl-D-alanine + UDP-N-acetyl-alpha-D-glucosamine = di-trans,octa-cis-undecaprenyl diphospho-[N-acetyl-alpha-D-glucosaminyl-(1-&gt;4)]-N-acetyl-alpha-D-muramoyl-L-alanyl-D-glutamyl-meso-2,6-diaminopimeloyl-D-alanyl-D-alanine + UDP + H(+)</text>
        <dbReference type="Rhea" id="RHEA:31227"/>
        <dbReference type="ChEBI" id="CHEBI:15378"/>
        <dbReference type="ChEBI" id="CHEBI:57705"/>
        <dbReference type="ChEBI" id="CHEBI:58223"/>
        <dbReference type="ChEBI" id="CHEBI:61387"/>
        <dbReference type="ChEBI" id="CHEBI:61388"/>
        <dbReference type="EC" id="2.4.1.227"/>
    </reaction>
</comment>
<comment type="pathway">
    <text evidence="1">Cell wall biogenesis; peptidoglycan biosynthesis.</text>
</comment>
<comment type="subcellular location">
    <subcellularLocation>
        <location evidence="1">Cell inner membrane</location>
        <topology evidence="1">Peripheral membrane protein</topology>
        <orientation evidence="1">Cytoplasmic side</orientation>
    </subcellularLocation>
</comment>
<comment type="similarity">
    <text evidence="1">Belongs to the glycosyltransferase 28 family. MurG subfamily.</text>
</comment>
<sequence>MSPSIVFTGGGTAGHVTPNIALIKEFRKEGWNVEYIGSVSGIEKEMIEPMDIPFHGVSSGKLRRYFSLKNLLDPFKIVLGIIQSSLLFYKIKPDVVFSKGGFVAFPVVVGAWLNRIPVVAHESDMSPGLANRLSFPFVNKICLTFDAGKKYFKRQDKIEVTGTQISSQLLTGNPMKGLEVCRFISSKTCLLVMGGSLGAGSINSCIRSALKQLTSEFQVIHLCGKGKLDSSLVGVEGYCQFEYANEELADLFAASSVVISRAGANSLYEILALGKPHILIPISSQVSRGDQIQNARYFQGLGISVVIQDELLKADVLLQAVQDVMRKKDEIDNKIKALKIESATDKIVAIIKEQAHVQTPRIV</sequence>